<keyword id="KW-0963">Cytoplasm</keyword>
<keyword id="KW-0396">Initiation factor</keyword>
<keyword id="KW-0648">Protein biosynthesis</keyword>
<sequence length="178" mass="20605">MSKKEEKVLINEEIVDLTDRVRLVDGEGEPKIVDSSKALEIAYNKGLDLVLVAPNANPPVAKVMDYGKYKYEQEKKKKEAKKKQVKIEVKEIKFTSKIQENDINYKVKHIKEFLEKGKHVKLRVFLRGRELATPEKGFEVINKVWDMISDVAEKQNEPKLEGNYINLLVTPIKKKIKK</sequence>
<name>IF3_NAUPA</name>
<evidence type="ECO:0000255" key="1">
    <source>
        <dbReference type="HAMAP-Rule" id="MF_00080"/>
    </source>
</evidence>
<gene>
    <name evidence="1" type="primary">infC</name>
    <name type="ordered locus">NAMH_1343</name>
</gene>
<organism>
    <name type="scientific">Nautilia profundicola (strain ATCC BAA-1463 / DSM 18972 / AmH)</name>
    <dbReference type="NCBI Taxonomy" id="598659"/>
    <lineage>
        <taxon>Bacteria</taxon>
        <taxon>Pseudomonadati</taxon>
        <taxon>Campylobacterota</taxon>
        <taxon>Epsilonproteobacteria</taxon>
        <taxon>Nautiliales</taxon>
        <taxon>Nautiliaceae</taxon>
        <taxon>Nautilia</taxon>
    </lineage>
</organism>
<accession>B9L5U8</accession>
<proteinExistence type="inferred from homology"/>
<dbReference type="EMBL" id="CP001279">
    <property type="protein sequence ID" value="ACM92808.1"/>
    <property type="molecule type" value="Genomic_DNA"/>
</dbReference>
<dbReference type="RefSeq" id="WP_015901860.1">
    <property type="nucleotide sequence ID" value="NC_012115.1"/>
</dbReference>
<dbReference type="SMR" id="B9L5U8"/>
<dbReference type="STRING" id="598659.NAMH_1343"/>
<dbReference type="KEGG" id="nam:NAMH_1343"/>
<dbReference type="eggNOG" id="COG0290">
    <property type="taxonomic scope" value="Bacteria"/>
</dbReference>
<dbReference type="HOGENOM" id="CLU_054919_3_2_7"/>
<dbReference type="OrthoDB" id="9806014at2"/>
<dbReference type="Proteomes" id="UP000000448">
    <property type="component" value="Chromosome"/>
</dbReference>
<dbReference type="GO" id="GO:0005829">
    <property type="term" value="C:cytosol"/>
    <property type="evidence" value="ECO:0007669"/>
    <property type="project" value="TreeGrafter"/>
</dbReference>
<dbReference type="GO" id="GO:0016020">
    <property type="term" value="C:membrane"/>
    <property type="evidence" value="ECO:0007669"/>
    <property type="project" value="TreeGrafter"/>
</dbReference>
<dbReference type="GO" id="GO:0043022">
    <property type="term" value="F:ribosome binding"/>
    <property type="evidence" value="ECO:0007669"/>
    <property type="project" value="TreeGrafter"/>
</dbReference>
<dbReference type="GO" id="GO:0003743">
    <property type="term" value="F:translation initiation factor activity"/>
    <property type="evidence" value="ECO:0007669"/>
    <property type="project" value="UniProtKB-UniRule"/>
</dbReference>
<dbReference type="GO" id="GO:0032790">
    <property type="term" value="P:ribosome disassembly"/>
    <property type="evidence" value="ECO:0007669"/>
    <property type="project" value="TreeGrafter"/>
</dbReference>
<dbReference type="Gene3D" id="3.30.110.10">
    <property type="entry name" value="Translation initiation factor 3 (IF-3), C-terminal domain"/>
    <property type="match status" value="1"/>
</dbReference>
<dbReference type="Gene3D" id="3.10.20.80">
    <property type="entry name" value="Translation initiation factor 3 (IF-3), N-terminal domain"/>
    <property type="match status" value="1"/>
</dbReference>
<dbReference type="HAMAP" id="MF_00080">
    <property type="entry name" value="IF_3"/>
    <property type="match status" value="1"/>
</dbReference>
<dbReference type="InterPro" id="IPR036788">
    <property type="entry name" value="T_IF-3_C_sf"/>
</dbReference>
<dbReference type="InterPro" id="IPR036787">
    <property type="entry name" value="T_IF-3_N_sf"/>
</dbReference>
<dbReference type="InterPro" id="IPR019813">
    <property type="entry name" value="Translation_initiation_fac3_CS"/>
</dbReference>
<dbReference type="InterPro" id="IPR001288">
    <property type="entry name" value="Translation_initiation_fac_3"/>
</dbReference>
<dbReference type="InterPro" id="IPR019815">
    <property type="entry name" value="Translation_initiation_fac_3_C"/>
</dbReference>
<dbReference type="InterPro" id="IPR019814">
    <property type="entry name" value="Translation_initiation_fac_3_N"/>
</dbReference>
<dbReference type="NCBIfam" id="TIGR00168">
    <property type="entry name" value="infC"/>
    <property type="match status" value="1"/>
</dbReference>
<dbReference type="PANTHER" id="PTHR10938">
    <property type="entry name" value="TRANSLATION INITIATION FACTOR IF-3"/>
    <property type="match status" value="1"/>
</dbReference>
<dbReference type="PANTHER" id="PTHR10938:SF0">
    <property type="entry name" value="TRANSLATION INITIATION FACTOR IF-3, MITOCHONDRIAL"/>
    <property type="match status" value="1"/>
</dbReference>
<dbReference type="Pfam" id="PF00707">
    <property type="entry name" value="IF3_C"/>
    <property type="match status" value="1"/>
</dbReference>
<dbReference type="Pfam" id="PF05198">
    <property type="entry name" value="IF3_N"/>
    <property type="match status" value="1"/>
</dbReference>
<dbReference type="SUPFAM" id="SSF55200">
    <property type="entry name" value="Translation initiation factor IF3, C-terminal domain"/>
    <property type="match status" value="1"/>
</dbReference>
<dbReference type="SUPFAM" id="SSF54364">
    <property type="entry name" value="Translation initiation factor IF3, N-terminal domain"/>
    <property type="match status" value="1"/>
</dbReference>
<dbReference type="PROSITE" id="PS00938">
    <property type="entry name" value="IF3"/>
    <property type="match status" value="1"/>
</dbReference>
<protein>
    <recommendedName>
        <fullName evidence="1">Translation initiation factor IF-3</fullName>
    </recommendedName>
</protein>
<feature type="chain" id="PRO_1000190840" description="Translation initiation factor IF-3">
    <location>
        <begin position="1"/>
        <end position="178"/>
    </location>
</feature>
<comment type="function">
    <text evidence="1">IF-3 binds to the 30S ribosomal subunit and shifts the equilibrium between 70S ribosomes and their 50S and 30S subunits in favor of the free subunits, thus enhancing the availability of 30S subunits on which protein synthesis initiation begins.</text>
</comment>
<comment type="subunit">
    <text evidence="1">Monomer.</text>
</comment>
<comment type="subcellular location">
    <subcellularLocation>
        <location evidence="1">Cytoplasm</location>
    </subcellularLocation>
</comment>
<comment type="similarity">
    <text evidence="1">Belongs to the IF-3 family.</text>
</comment>
<reference key="1">
    <citation type="journal article" date="2009" name="PLoS Genet.">
        <title>Adaptations to submarine hydrothermal environments exemplified by the genome of Nautilia profundicola.</title>
        <authorList>
            <person name="Campbell B.J."/>
            <person name="Smith J.L."/>
            <person name="Hanson T.E."/>
            <person name="Klotz M.G."/>
            <person name="Stein L.Y."/>
            <person name="Lee C.K."/>
            <person name="Wu D."/>
            <person name="Robinson J.M."/>
            <person name="Khouri H.M."/>
            <person name="Eisen J.A."/>
            <person name="Cary S.C."/>
        </authorList>
    </citation>
    <scope>NUCLEOTIDE SEQUENCE [LARGE SCALE GENOMIC DNA]</scope>
    <source>
        <strain>ATCC BAA-1463 / DSM 18972 / AmH</strain>
    </source>
</reference>